<comment type="function">
    <text evidence="1">Photosystem II (PSII) is a light-driven water:plastoquinone oxidoreductase that uses light energy to abstract electrons from H(2)O, generating O(2) and a proton gradient subsequently used for ATP formation. It consists of a core antenna complex that captures photons, and an electron transfer chain that converts photonic excitation into a charge separation. The D1/D2 (PsbA/PsbD) reaction center heterodimer binds P680, the primary electron donor of PSII as well as several subsequent electron acceptors.</text>
</comment>
<comment type="catalytic activity">
    <reaction evidence="1">
        <text>2 a plastoquinone + 4 hnu + 2 H2O = 2 a plastoquinol + O2</text>
        <dbReference type="Rhea" id="RHEA:36359"/>
        <dbReference type="Rhea" id="RHEA-COMP:9561"/>
        <dbReference type="Rhea" id="RHEA-COMP:9562"/>
        <dbReference type="ChEBI" id="CHEBI:15377"/>
        <dbReference type="ChEBI" id="CHEBI:15379"/>
        <dbReference type="ChEBI" id="CHEBI:17757"/>
        <dbReference type="ChEBI" id="CHEBI:30212"/>
        <dbReference type="ChEBI" id="CHEBI:62192"/>
        <dbReference type="EC" id="1.10.3.9"/>
    </reaction>
</comment>
<comment type="cofactor">
    <text evidence="1">The D1/D2 heterodimer binds P680, chlorophylls that are the primary electron donor of PSII, and subsequent electron acceptors. It shares a non-heme iron and each subunit binds pheophytin, quinone, additional chlorophylls, carotenoids and lipids. D1 provides most of the ligands for the Mn4-Ca-O5 cluster of the oxygen-evolving complex (OEC). There is also a Cl(-1) ion associated with D1 and D2, which is required for oxygen evolution. The PSII complex binds additional chlorophylls, carotenoids and specific lipids.</text>
</comment>
<comment type="subunit">
    <text evidence="1">PSII is composed of 1 copy each of membrane proteins PsbA, PsbB, PsbC, PsbD, PsbE, PsbF, PsbH, PsbI, PsbJ, PsbK, PsbL, PsbM, PsbT, PsbX, PsbY, PsbZ, Psb30/Ycf12, peripheral proteins PsbO, CyanoQ (PsbQ), PsbU, PsbV and a large number of cofactors. It forms dimeric complexes.</text>
</comment>
<comment type="subcellular location">
    <subcellularLocation>
        <location evidence="1">Cellular thylakoid membrane</location>
        <topology evidence="1">Multi-pass membrane protein</topology>
    </subcellularLocation>
</comment>
<comment type="PTM">
    <text evidence="1">Tyr-161 forms a radical intermediate that is referred to as redox-active TyrZ, YZ or Y-Z.</text>
</comment>
<comment type="PTM">
    <text evidence="1">C-terminally processed by CtpA; processing is essential to allow assembly of the oxygen-evolving complex and thus photosynthetic growth.</text>
</comment>
<comment type="miscellaneous">
    <text evidence="1">Cyanobacteria usually contain more than 2 copies of the psbA gene.</text>
</comment>
<comment type="miscellaneous">
    <text evidence="1">2 of the reaction center chlorophylls (ChlD1 and ChlD2) are entirely coordinated by water.</text>
</comment>
<comment type="miscellaneous">
    <text evidence="1">Herbicides such as atrazine, BNT, diuron or ioxynil bind in the Q(B) binding site and block subsequent electron transfer.</text>
</comment>
<comment type="similarity">
    <text evidence="1">Belongs to the reaction center PufL/M/PsbA/D family.</text>
</comment>
<name>PSBA_PROHO</name>
<dbReference type="EC" id="1.10.3.9" evidence="1"/>
<dbReference type="EMBL" id="X14308">
    <property type="protein sequence ID" value="CAA32489.1"/>
    <property type="molecule type" value="Genomic_DNA"/>
</dbReference>
<dbReference type="EMBL" id="X14523">
    <property type="protein sequence ID" value="CAA32665.1"/>
    <property type="molecule type" value="Genomic_DNA"/>
</dbReference>
<dbReference type="PIR" id="S02171">
    <property type="entry name" value="F2MWD1"/>
</dbReference>
<dbReference type="SMR" id="P15191"/>
<dbReference type="GO" id="GO:0009523">
    <property type="term" value="C:photosystem II"/>
    <property type="evidence" value="ECO:0007669"/>
    <property type="project" value="UniProtKB-KW"/>
</dbReference>
<dbReference type="GO" id="GO:0031676">
    <property type="term" value="C:plasma membrane-derived thylakoid membrane"/>
    <property type="evidence" value="ECO:0007669"/>
    <property type="project" value="UniProtKB-SubCell"/>
</dbReference>
<dbReference type="GO" id="GO:0016168">
    <property type="term" value="F:chlorophyll binding"/>
    <property type="evidence" value="ECO:0007669"/>
    <property type="project" value="UniProtKB-UniRule"/>
</dbReference>
<dbReference type="GO" id="GO:0045156">
    <property type="term" value="F:electron transporter, transferring electrons within the cyclic electron transport pathway of photosynthesis activity"/>
    <property type="evidence" value="ECO:0007669"/>
    <property type="project" value="InterPro"/>
</dbReference>
<dbReference type="GO" id="GO:0005506">
    <property type="term" value="F:iron ion binding"/>
    <property type="evidence" value="ECO:0007669"/>
    <property type="project" value="UniProtKB-UniRule"/>
</dbReference>
<dbReference type="GO" id="GO:0016682">
    <property type="term" value="F:oxidoreductase activity, acting on diphenols and related substances as donors, oxygen as acceptor"/>
    <property type="evidence" value="ECO:0007669"/>
    <property type="project" value="UniProtKB-UniRule"/>
</dbReference>
<dbReference type="GO" id="GO:0010242">
    <property type="term" value="F:oxygen evolving activity"/>
    <property type="evidence" value="ECO:0007669"/>
    <property type="project" value="UniProtKB-EC"/>
</dbReference>
<dbReference type="GO" id="GO:0009772">
    <property type="term" value="P:photosynthetic electron transport in photosystem II"/>
    <property type="evidence" value="ECO:0007669"/>
    <property type="project" value="InterPro"/>
</dbReference>
<dbReference type="GO" id="GO:0009635">
    <property type="term" value="P:response to herbicide"/>
    <property type="evidence" value="ECO:0007669"/>
    <property type="project" value="UniProtKB-KW"/>
</dbReference>
<dbReference type="CDD" id="cd09289">
    <property type="entry name" value="Photosystem-II_D1"/>
    <property type="match status" value="1"/>
</dbReference>
<dbReference type="FunFam" id="1.20.85.10:FF:000002">
    <property type="entry name" value="Photosystem II protein D1"/>
    <property type="match status" value="1"/>
</dbReference>
<dbReference type="Gene3D" id="1.20.85.10">
    <property type="entry name" value="Photosystem II protein D1-like"/>
    <property type="match status" value="1"/>
</dbReference>
<dbReference type="HAMAP" id="MF_01379">
    <property type="entry name" value="PSII_PsbA_D1"/>
    <property type="match status" value="1"/>
</dbReference>
<dbReference type="InterPro" id="IPR055266">
    <property type="entry name" value="D1/D2"/>
</dbReference>
<dbReference type="InterPro" id="IPR036854">
    <property type="entry name" value="Photo_II_D1/D2_sf"/>
</dbReference>
<dbReference type="InterPro" id="IPR000484">
    <property type="entry name" value="Photo_RC_L/M"/>
</dbReference>
<dbReference type="InterPro" id="IPR055265">
    <property type="entry name" value="Photo_RC_L/M_CS"/>
</dbReference>
<dbReference type="InterPro" id="IPR005867">
    <property type="entry name" value="PSII_D1"/>
</dbReference>
<dbReference type="NCBIfam" id="TIGR01151">
    <property type="entry name" value="psbA"/>
    <property type="match status" value="1"/>
</dbReference>
<dbReference type="PANTHER" id="PTHR33149:SF12">
    <property type="entry name" value="PHOTOSYSTEM II D2 PROTEIN"/>
    <property type="match status" value="1"/>
</dbReference>
<dbReference type="PANTHER" id="PTHR33149">
    <property type="entry name" value="PHOTOSYSTEM II PROTEIN D1"/>
    <property type="match status" value="1"/>
</dbReference>
<dbReference type="Pfam" id="PF00124">
    <property type="entry name" value="Photo_RC"/>
    <property type="match status" value="1"/>
</dbReference>
<dbReference type="PRINTS" id="PR00256">
    <property type="entry name" value="REACTNCENTRE"/>
</dbReference>
<dbReference type="SUPFAM" id="SSF81483">
    <property type="entry name" value="Bacterial photosystem II reaction centre, L and M subunits"/>
    <property type="match status" value="1"/>
</dbReference>
<dbReference type="PROSITE" id="PS00244">
    <property type="entry name" value="REACTION_CENTER"/>
    <property type="match status" value="1"/>
</dbReference>
<feature type="chain" id="PRO_0000090483" description="Photosystem II protein D1" evidence="1">
    <location>
        <begin position="1"/>
        <end position="344"/>
    </location>
</feature>
<feature type="propeptide" id="PRO_0000316373" evidence="1">
    <location>
        <begin position="345"/>
        <end position="353"/>
    </location>
</feature>
<feature type="transmembrane region" description="Helical" evidence="1">
    <location>
        <begin position="29"/>
        <end position="46"/>
    </location>
</feature>
<feature type="transmembrane region" description="Helical" evidence="1">
    <location>
        <begin position="118"/>
        <end position="133"/>
    </location>
</feature>
<feature type="transmembrane region" description="Helical" evidence="1">
    <location>
        <begin position="142"/>
        <end position="156"/>
    </location>
</feature>
<feature type="transmembrane region" description="Helical" evidence="1">
    <location>
        <begin position="197"/>
        <end position="218"/>
    </location>
</feature>
<feature type="transmembrane region" description="Helical" evidence="1">
    <location>
        <begin position="274"/>
        <end position="288"/>
    </location>
</feature>
<feature type="binding site" description="axial binding residue" evidence="1">
    <location>
        <position position="118"/>
    </location>
    <ligand>
        <name>chlorophyll a</name>
        <dbReference type="ChEBI" id="CHEBI:58416"/>
        <label>ChlzD1</label>
    </ligand>
    <ligandPart>
        <name>Mg</name>
        <dbReference type="ChEBI" id="CHEBI:25107"/>
    </ligandPart>
</feature>
<feature type="binding site" evidence="1">
    <location>
        <position position="126"/>
    </location>
    <ligand>
        <name>pheophytin a</name>
        <dbReference type="ChEBI" id="CHEBI:136840"/>
        <label>D1</label>
    </ligand>
</feature>
<feature type="binding site" evidence="1">
    <location>
        <position position="170"/>
    </location>
    <ligand>
        <name>[CaMn4O5] cluster</name>
        <dbReference type="ChEBI" id="CHEBI:189552"/>
    </ligand>
</feature>
<feature type="binding site" evidence="1">
    <location>
        <position position="189"/>
    </location>
    <ligand>
        <name>[CaMn4O5] cluster</name>
        <dbReference type="ChEBI" id="CHEBI:189552"/>
    </ligand>
</feature>
<feature type="binding site" description="axial binding residue" evidence="1">
    <location>
        <position position="198"/>
    </location>
    <ligand>
        <name>chlorophyll a</name>
        <dbReference type="ChEBI" id="CHEBI:58416"/>
        <label>PD1</label>
    </ligand>
    <ligandPart>
        <name>Mg</name>
        <dbReference type="ChEBI" id="CHEBI:25107"/>
    </ligandPart>
</feature>
<feature type="binding site" evidence="1">
    <location>
        <position position="215"/>
    </location>
    <ligand>
        <name>a quinone</name>
        <dbReference type="ChEBI" id="CHEBI:132124"/>
        <label>B</label>
    </ligand>
</feature>
<feature type="binding site" evidence="1">
    <location>
        <position position="215"/>
    </location>
    <ligand>
        <name>Fe cation</name>
        <dbReference type="ChEBI" id="CHEBI:24875"/>
        <note>ligand shared with heterodimeric partner</note>
    </ligand>
</feature>
<feature type="binding site" evidence="1">
    <location>
        <begin position="264"/>
        <end position="265"/>
    </location>
    <ligand>
        <name>a quinone</name>
        <dbReference type="ChEBI" id="CHEBI:132124"/>
        <label>B</label>
    </ligand>
</feature>
<feature type="binding site" evidence="1">
    <location>
        <position position="272"/>
    </location>
    <ligand>
        <name>Fe cation</name>
        <dbReference type="ChEBI" id="CHEBI:24875"/>
        <note>ligand shared with heterodimeric partner</note>
    </ligand>
</feature>
<feature type="binding site" evidence="1">
    <location>
        <position position="332"/>
    </location>
    <ligand>
        <name>[CaMn4O5] cluster</name>
        <dbReference type="ChEBI" id="CHEBI:189552"/>
    </ligand>
</feature>
<feature type="binding site" evidence="1">
    <location>
        <position position="333"/>
    </location>
    <ligand>
        <name>[CaMn4O5] cluster</name>
        <dbReference type="ChEBI" id="CHEBI:189552"/>
    </ligand>
</feature>
<feature type="binding site" evidence="1">
    <location>
        <position position="342"/>
    </location>
    <ligand>
        <name>[CaMn4O5] cluster</name>
        <dbReference type="ChEBI" id="CHEBI:189552"/>
    </ligand>
</feature>
<feature type="binding site" evidence="1">
    <location>
        <position position="344"/>
    </location>
    <ligand>
        <name>[CaMn4O5] cluster</name>
        <dbReference type="ChEBI" id="CHEBI:189552"/>
    </ligand>
</feature>
<feature type="site" description="Tyrosine radical intermediate" evidence="1">
    <location>
        <position position="161"/>
    </location>
</feature>
<feature type="site" description="Stabilizes free radical intermediate" evidence="1">
    <location>
        <position position="190"/>
    </location>
</feature>
<feature type="site" description="Cleavage; by CtpA" evidence="1">
    <location>
        <begin position="344"/>
        <end position="345"/>
    </location>
</feature>
<keyword id="KW-0106">Calcium</keyword>
<keyword id="KW-0148">Chlorophyll</keyword>
<keyword id="KW-0157">Chromophore</keyword>
<keyword id="KW-0249">Electron transport</keyword>
<keyword id="KW-0359">Herbicide resistance</keyword>
<keyword id="KW-0408">Iron</keyword>
<keyword id="KW-0460">Magnesium</keyword>
<keyword id="KW-0464">Manganese</keyword>
<keyword id="KW-0472">Membrane</keyword>
<keyword id="KW-0479">Metal-binding</keyword>
<keyword id="KW-0560">Oxidoreductase</keyword>
<keyword id="KW-0602">Photosynthesis</keyword>
<keyword id="KW-0604">Photosystem II</keyword>
<keyword id="KW-0793">Thylakoid</keyword>
<keyword id="KW-0812">Transmembrane</keyword>
<keyword id="KW-1133">Transmembrane helix</keyword>
<keyword id="KW-0813">Transport</keyword>
<sequence>MTTALRQRESANAWEQFCQWIASTENRLYVGWFGVIMIPTLLTATICFIIAFIAAPPVDIDGIREPVAGSLMYGNNIISGAVVPSSNAIGLHFYPIWEAASMDEWLYNGGPYQLVVFHFLIGIFCYMGREWELSYRLGMRPWICVAYSAPVAAATAVFLIYPLGQGSFSDGMPLGISGTFNFMLVFQAEHNILMHPFHMLGVAGVFGGSLFSAMHGSLVTSSLVRETSENESQNYGYKFGQEEETYNIVAAHGYFGRLIFQYASFNNSRALHFFLAAWPVVGIWFTSLGISTMAFNLNGFNFNQSVMDSQGRVISTWADILNRANLGFEVMHERNAHNFPLDLAAVKAPSIIG</sequence>
<gene>
    <name evidence="1 2" type="primary">psbA1</name>
    <name type="synonym">psbA-I</name>
</gene>
<gene>
    <name evidence="1 2" type="primary">psbA2</name>
    <name type="synonym">psbA-II</name>
</gene>
<organism>
    <name type="scientific">Prochlorothrix hollandica</name>
    <dbReference type="NCBI Taxonomy" id="1223"/>
    <lineage>
        <taxon>Bacteria</taxon>
        <taxon>Bacillati</taxon>
        <taxon>Cyanobacteriota</taxon>
        <taxon>Cyanophyceae</taxon>
        <taxon>Prochlorotrichales</taxon>
        <taxon>Prochlorotrichaceae</taxon>
        <taxon>Prochlorothrix</taxon>
    </lineage>
</organism>
<evidence type="ECO:0000255" key="1">
    <source>
        <dbReference type="HAMAP-Rule" id="MF_01379"/>
    </source>
</evidence>
<evidence type="ECO:0000305" key="2"/>
<proteinExistence type="inferred from homology"/>
<reference key="1">
    <citation type="journal article" date="1989" name="Nature">
        <title>psbA genes indicate common ancestry of prochlorophytes and chloroplasts.</title>
        <authorList>
            <person name="Morden C.W."/>
            <person name="Golden S.S."/>
        </authorList>
    </citation>
    <scope>NUCLEOTIDE SEQUENCE [GENOMIC DNA]</scope>
</reference>
<accession>P15191</accession>
<protein>
    <recommendedName>
        <fullName evidence="1">Photosystem II protein D1</fullName>
        <shortName evidence="1">PSII D1 protein</shortName>
        <ecNumber evidence="1">1.10.3.9</ecNumber>
    </recommendedName>
    <alternativeName>
        <fullName evidence="1">Photosystem II Q(B) protein</fullName>
    </alternativeName>
</protein>